<accession>Q9UEU0</accession>
<accession>O43547</accession>
<accession>Q96J28</accession>
<sequence length="232" mass="26688">MASSAASSEHFEKLHEIFRGLHEDLQGVPERLLGTAGTEEKKKLIRDFDEKQQEANETLAEMEEELRYAPLSFRNPMMSKLRNYRKDLAKLHREVRSTPLTATPGGRGDMKYGIYAVENEHMNRLQSQRAMLLQGTESLNRATQSIERSHRIATETDQIGSEIIEELGEQRDQLERTKSRLVNTSENLSKSRKILRSMSRKVTTNKLLLSIIILLELAILGGLVYYKFFRSH</sequence>
<organism>
    <name type="scientific">Homo sapiens</name>
    <name type="common">Human</name>
    <dbReference type="NCBI Taxonomy" id="9606"/>
    <lineage>
        <taxon>Eukaryota</taxon>
        <taxon>Metazoa</taxon>
        <taxon>Chordata</taxon>
        <taxon>Craniata</taxon>
        <taxon>Vertebrata</taxon>
        <taxon>Euteleostomi</taxon>
        <taxon>Mammalia</taxon>
        <taxon>Eutheria</taxon>
        <taxon>Euarchontoglires</taxon>
        <taxon>Primates</taxon>
        <taxon>Haplorrhini</taxon>
        <taxon>Catarrhini</taxon>
        <taxon>Hominidae</taxon>
        <taxon>Homo</taxon>
    </lineage>
</organism>
<evidence type="ECO:0000250" key="1">
    <source>
        <dbReference type="UniProtKB" id="O88384"/>
    </source>
</evidence>
<evidence type="ECO:0000255" key="2"/>
<evidence type="ECO:0000269" key="3">
    <source>
    </source>
</evidence>
<evidence type="ECO:0000269" key="4">
    <source>
    </source>
</evidence>
<evidence type="ECO:0000303" key="5">
    <source>
    </source>
</evidence>
<evidence type="ECO:0000305" key="6"/>
<evidence type="ECO:0007744" key="7">
    <source>
        <dbReference type="PDB" id="2V8S"/>
    </source>
</evidence>
<evidence type="ECO:0007744" key="8">
    <source>
    </source>
</evidence>
<evidence type="ECO:0007744" key="9">
    <source>
    </source>
</evidence>
<evidence type="ECO:0007744" key="10">
    <source>
    </source>
</evidence>
<evidence type="ECO:0007744" key="11">
    <source>
    </source>
</evidence>
<evidence type="ECO:0007744" key="12">
    <source>
    </source>
</evidence>
<evidence type="ECO:0007829" key="13">
    <source>
        <dbReference type="PDB" id="2V8S"/>
    </source>
</evidence>
<proteinExistence type="evidence at protein level"/>
<feature type="initiator methionine" description="Removed" evidence="8 9 12">
    <location>
        <position position="1"/>
    </location>
</feature>
<feature type="chain" id="PRO_0000218228" description="Vesicle transport through interaction with t-SNAREs homolog 1B">
    <location>
        <begin position="2"/>
        <end position="232"/>
    </location>
</feature>
<feature type="topological domain" description="Cytoplasmic" evidence="2">
    <location>
        <begin position="2"/>
        <end position="208"/>
    </location>
</feature>
<feature type="transmembrane region" description="Helical; Anchor for type IV membrane protein" evidence="2">
    <location>
        <begin position="209"/>
        <end position="229"/>
    </location>
</feature>
<feature type="topological domain" description="Vesicular" evidence="2">
    <location>
        <begin position="230"/>
        <end position="232"/>
    </location>
</feature>
<feature type="region of interest" description="Interaction with CLINT1" evidence="3 7">
    <location>
        <begin position="2"/>
        <end position="23"/>
    </location>
</feature>
<feature type="region of interest" description="Interaction with CLINT1" evidence="3 7">
    <location>
        <begin position="69"/>
        <end position="73"/>
    </location>
</feature>
<feature type="coiled-coil region" evidence="2">
    <location>
        <begin position="35"/>
        <end position="98"/>
    </location>
</feature>
<feature type="coiled-coil region" evidence="2">
    <location>
        <begin position="161"/>
        <end position="198"/>
    </location>
</feature>
<feature type="modified residue" description="N-acetylalanine" evidence="8 9 12">
    <location>
        <position position="2"/>
    </location>
</feature>
<feature type="modified residue" description="Phosphothreonine" evidence="10">
    <location>
        <position position="103"/>
    </location>
</feature>
<feature type="modified residue" description="Omega-N-methylarginine" evidence="11">
    <location>
        <position position="107"/>
    </location>
</feature>
<feature type="modified residue" description="Phosphoserine" evidence="10">
    <location>
        <position position="138"/>
    </location>
</feature>
<feature type="splice variant" id="VSP_006753" description="In isoform Short." evidence="5">
    <location>
        <begin position="1"/>
        <end position="61"/>
    </location>
</feature>
<feature type="mutagenesis site" description="Abolished binding to CLINT1." evidence="3">
    <original>S</original>
    <variation>W</variation>
    <location>
        <position position="8"/>
    </location>
</feature>
<feature type="mutagenesis site" description="Abolished binding to CLINT1. Abnormal subcellular localization restricted to late endosomes and lysosomes." evidence="3">
    <original>E</original>
    <variation>A</variation>
    <location>
        <position position="12"/>
    </location>
</feature>
<feature type="mutagenesis site" description="Normal binding to CLINT1." evidence="3">
    <original>I</original>
    <variation>S</variation>
    <location>
        <position position="17"/>
    </location>
</feature>
<feature type="mutagenesis site" description="Abolished binding to CLINT1. Rescued binding to CLINT1 E-146 mutant." evidence="3">
    <original>E</original>
    <variation>R</variation>
    <location>
        <position position="23"/>
    </location>
</feature>
<feature type="mutagenesis site" description="Abolished binding to CLINT1." evidence="3">
    <original>E</original>
    <variation>W</variation>
    <location>
        <position position="65"/>
    </location>
</feature>
<feature type="mutagenesis site" description="Abolished binding to CLINT1. Abnormal subcellular localization restricted to late endosomes and lysosomes." evidence="3">
    <original>F</original>
    <variation>S</variation>
    <location>
        <position position="73"/>
    </location>
</feature>
<feature type="mutagenesis site" description="Reduced binding to CLINT1." evidence="3">
    <original>P</original>
    <variation>S</variation>
    <location>
        <position position="76"/>
    </location>
</feature>
<feature type="mutagenesis site" description="Normal binding to CLINT1." evidence="3">
    <original>M</original>
    <variation>S</variation>
    <location>
        <position position="77"/>
    </location>
</feature>
<feature type="sequence conflict" description="In Ref. 1; AAC52016." evidence="6" ref="1">
    <original>D</original>
    <variation>N</variation>
    <location>
        <position position="24"/>
    </location>
</feature>
<feature type="turn" evidence="13">
    <location>
        <begin position="4"/>
        <end position="6"/>
    </location>
</feature>
<feature type="helix" evidence="13">
    <location>
        <begin position="9"/>
        <end position="26"/>
    </location>
</feature>
<feature type="turn" evidence="13">
    <location>
        <begin position="29"/>
        <end position="31"/>
    </location>
</feature>
<feature type="strand" evidence="13">
    <location>
        <begin position="32"/>
        <end position="34"/>
    </location>
</feature>
<feature type="helix" evidence="13">
    <location>
        <begin position="39"/>
        <end position="66"/>
    </location>
</feature>
<feature type="helix" evidence="13">
    <location>
        <begin position="71"/>
        <end position="93"/>
    </location>
</feature>
<comment type="function">
    <text evidence="4">V-SNARE that mediates vesicle transport pathways through interactions with t-SNAREs on the target membrane. These interactions are proposed to mediate aspects of the specificity of vesicle trafficking and to promote fusion of the lipid bilayers. May be concerned with increased secretion of cytokines associated with cellular senescence.</text>
</comment>
<comment type="subunit">
    <text evidence="1 3 4">Forms a SNARE complex with STX7, STX8 and VAMP8 which functions in the homotypic fusion of late endosomes. Component of the SNARE complex composed of STX7, STX8, VAMP7 and VIT1B that is required for heterotypic fusion of late endosomes with lysosomes (By similarity). May interact with STX17 (PubMed:23217709). Interacts with CLINT1 (PubMed:18033301).</text>
</comment>
<comment type="interaction">
    <interactant intactId="EBI-723716">
        <id>Q9UEU0</id>
    </interactant>
    <interactant intactId="EBI-13059134">
        <id>Q13520</id>
        <label>AQP6</label>
    </interactant>
    <organismsDiffer>false</organismsDiffer>
    <experiments>3</experiments>
</comment>
<comment type="interaction">
    <interactant intactId="EBI-723716">
        <id>Q9UEU0</id>
    </interactant>
    <interactant intactId="EBI-12808270">
        <id>P07307-3</id>
        <label>ASGR2</label>
    </interactant>
    <organismsDiffer>false</organismsDiffer>
    <experiments>3</experiments>
</comment>
<comment type="interaction">
    <interactant intactId="EBI-723716">
        <id>Q9UEU0</id>
    </interactant>
    <interactant intactId="EBI-13046140">
        <id>P15529-3</id>
        <label>CD46</label>
    </interactant>
    <organismsDiffer>false</organismsDiffer>
    <experiments>3</experiments>
</comment>
<comment type="interaction">
    <interactant intactId="EBI-723716">
        <id>Q9UEU0</id>
    </interactant>
    <interactant intactId="EBI-7797864">
        <id>P11912</id>
        <label>CD79A</label>
    </interactant>
    <organismsDiffer>false</organismsDiffer>
    <experiments>3</experiments>
</comment>
<comment type="interaction">
    <interactant intactId="EBI-723716">
        <id>Q9UEU0</id>
    </interactant>
    <interactant intactId="EBI-349854">
        <id>P13569</id>
        <label>CFTR</label>
    </interactant>
    <organismsDiffer>false</organismsDiffer>
    <experiments>10</experiments>
</comment>
<comment type="interaction">
    <interactant intactId="EBI-723716">
        <id>Q9UEU0</id>
    </interactant>
    <interactant intactId="EBI-17233035">
        <id>Q9BUF7-2</id>
        <label>CRB3</label>
    </interactant>
    <organismsDiffer>false</organismsDiffer>
    <experiments>3</experiments>
</comment>
<comment type="interaction">
    <interactant intactId="EBI-723716">
        <id>Q9UEU0</id>
    </interactant>
    <interactant intactId="EBI-781551">
        <id>Q9Y282</id>
        <label>ERGIC3</label>
    </interactant>
    <organismsDiffer>false</organismsDiffer>
    <experiments>3</experiments>
</comment>
<comment type="interaction">
    <interactant intactId="EBI-723716">
        <id>Q9UEU0</id>
    </interactant>
    <interactant intactId="EBI-2869867">
        <id>P12314</id>
        <label>FCGR1A</label>
    </interactant>
    <organismsDiffer>false</organismsDiffer>
    <experiments>3</experiments>
</comment>
<comment type="interaction">
    <interactant intactId="EBI-723716">
        <id>Q9UEU0</id>
    </interactant>
    <interactant intactId="EBI-11721746">
        <id>Q8TED1</id>
        <label>GPX8</label>
    </interactant>
    <organismsDiffer>false</organismsDiffer>
    <experiments>3</experiments>
</comment>
<comment type="interaction">
    <interactant intactId="EBI-723716">
        <id>Q9UEU0</id>
    </interactant>
    <interactant intactId="EBI-10266796">
        <id>Q8N5M9</id>
        <label>JAGN1</label>
    </interactant>
    <organismsDiffer>false</organismsDiffer>
    <experiments>3</experiments>
</comment>
<comment type="interaction">
    <interactant intactId="EBI-723716">
        <id>Q9UEU0</id>
    </interactant>
    <interactant intactId="EBI-749265">
        <id>Q8N6L0</id>
        <label>KASH5</label>
    </interactant>
    <organismsDiffer>false</organismsDiffer>
    <experiments>3</experiments>
</comment>
<comment type="interaction">
    <interactant intactId="EBI-723716">
        <id>Q9UEU0</id>
    </interactant>
    <interactant intactId="EBI-9018187">
        <id>P26715</id>
        <label>KLRC1</label>
    </interactant>
    <organismsDiffer>false</organismsDiffer>
    <experiments>3</experiments>
</comment>
<comment type="interaction">
    <interactant intactId="EBI-723716">
        <id>Q9UEU0</id>
    </interactant>
    <interactant intactId="EBI-10172290">
        <id>P60409</id>
        <label>KRTAP10-7</label>
    </interactant>
    <organismsDiffer>false</organismsDiffer>
    <experiments>3</experiments>
</comment>
<comment type="interaction">
    <interactant intactId="EBI-723716">
        <id>Q9UEU0</id>
    </interactant>
    <interactant intactId="EBI-10173166">
        <id>Q5T700</id>
        <label>LDLRAD1</label>
    </interactant>
    <organismsDiffer>false</organismsDiffer>
    <experiments>8</experiments>
</comment>
<comment type="interaction">
    <interactant intactId="EBI-723716">
        <id>Q9UEU0</id>
    </interactant>
    <interactant intactId="EBI-3867271">
        <id>Q9NQG1</id>
        <label>MANBAL</label>
    </interactant>
    <organismsDiffer>false</organismsDiffer>
    <experiments>3</experiments>
</comment>
<comment type="interaction">
    <interactant intactId="EBI-723716">
        <id>Q9UEU0</id>
    </interactant>
    <interactant intactId="EBI-1220572">
        <id>P54829</id>
        <label>PTPN5</label>
    </interactant>
    <organismsDiffer>false</organismsDiffer>
    <experiments>4</experiments>
</comment>
<comment type="interaction">
    <interactant intactId="EBI-723716">
        <id>Q9UEU0</id>
    </interactant>
    <interactant intactId="EBI-7545592">
        <id>Q9H6H4</id>
        <label>REEP4</label>
    </interactant>
    <organismsDiffer>false</organismsDiffer>
    <experiments>3</experiments>
</comment>
<comment type="interaction">
    <interactant intactId="EBI-723716">
        <id>Q9UEU0</id>
    </interactant>
    <interactant intactId="EBI-18397230">
        <id>Q6P5S7</id>
        <label>RNASEK</label>
    </interactant>
    <organismsDiffer>false</organismsDiffer>
    <experiments>3</experiments>
</comment>
<comment type="interaction">
    <interactant intactId="EBI-723716">
        <id>Q9UEU0</id>
    </interactant>
    <interactant intactId="EBI-3921243">
        <id>O60669</id>
        <label>SLC16A7</label>
    </interactant>
    <organismsDiffer>false</organismsDiffer>
    <experiments>3</experiments>
</comment>
<comment type="interaction">
    <interactant intactId="EBI-723716">
        <id>Q9UEU0</id>
    </interactant>
    <interactant intactId="EBI-17295964">
        <id>Q9NQQ7-3</id>
        <label>SLC35C2</label>
    </interactant>
    <organismsDiffer>false</organismsDiffer>
    <experiments>3</experiments>
</comment>
<comment type="interaction">
    <interactant intactId="EBI-723716">
        <id>Q9UEU0</id>
    </interactant>
    <interactant intactId="EBI-712466">
        <id>Q16623</id>
        <label>STX1A</label>
    </interactant>
    <organismsDiffer>false</organismsDiffer>
    <experiments>3</experiments>
</comment>
<comment type="interaction">
    <interactant intactId="EBI-723716">
        <id>Q9UEU0</id>
    </interactant>
    <interactant intactId="EBI-11956649">
        <id>P32856-2</id>
        <label>STX2</label>
    </interactant>
    <organismsDiffer>false</organismsDiffer>
    <experiments>3</experiments>
</comment>
<comment type="interaction">
    <interactant intactId="EBI-723716">
        <id>Q9UEU0</id>
    </interactant>
    <interactant intactId="EBI-744942">
        <id>Q12846</id>
        <label>STX4</label>
    </interactant>
    <organismsDiffer>false</organismsDiffer>
    <experiments>6</experiments>
</comment>
<comment type="interaction">
    <interactant intactId="EBI-723716">
        <id>Q9UEU0</id>
    </interactant>
    <interactant intactId="EBI-727240">
        <id>Q9UNK0</id>
        <label>STX8</label>
    </interactant>
    <organismsDiffer>false</organismsDiffer>
    <experiments>12</experiments>
</comment>
<comment type="interaction">
    <interactant intactId="EBI-723716">
        <id>Q9UEU0</id>
    </interactant>
    <interactant intactId="EBI-7131783">
        <id>Q8N205</id>
        <label>SYNE4</label>
    </interactant>
    <organismsDiffer>false</organismsDiffer>
    <experiments>4</experiments>
</comment>
<comment type="interaction">
    <interactant intactId="EBI-723716">
        <id>Q9UEU0</id>
    </interactant>
    <interactant intactId="EBI-8638294">
        <id>Q9NUH8</id>
        <label>TMEM14B</label>
    </interactant>
    <organismsDiffer>false</organismsDiffer>
    <experiments>3</experiments>
</comment>
<comment type="interaction">
    <interactant intactId="EBI-723716">
        <id>Q9UEU0</id>
    </interactant>
    <interactant intactId="EBI-8642211">
        <id>Q8WY98</id>
        <label>TMEM234</label>
    </interactant>
    <organismsDiffer>false</organismsDiffer>
    <experiments>3</experiments>
</comment>
<comment type="interaction">
    <interactant intactId="EBI-723716">
        <id>Q9UEU0</id>
    </interactant>
    <interactant intactId="EBI-726044">
        <id>Q9NW97</id>
        <label>TMEM51</label>
    </interactant>
    <organismsDiffer>false</organismsDiffer>
    <experiments>3</experiments>
</comment>
<comment type="interaction">
    <interactant intactId="EBI-723716">
        <id>Q9UEU0</id>
    </interactant>
    <interactant intactId="EBI-10262539">
        <id>Q8IWR1</id>
        <label>TRIM59</label>
    </interactant>
    <organismsDiffer>false</organismsDiffer>
    <experiments>9</experiments>
</comment>
<comment type="subcellular location">
    <subcellularLocation>
        <location evidence="3">Early endosome membrane</location>
        <topology evidence="2">Single-pass type IV membrane protein</topology>
    </subcellularLocation>
    <subcellularLocation>
        <location evidence="3 4">Late endosome membrane</location>
        <topology evidence="4">Single-pass type IV membrane protein</topology>
    </subcellularLocation>
    <subcellularLocation>
        <location evidence="3 4">Lysosome membrane</location>
    </subcellularLocation>
    <subcellularLocation>
        <location evidence="4">Cytoplasmic granule</location>
    </subcellularLocation>
    <subcellularLocation>
        <location evidence="3">Recycling endosome membrane</location>
        <topology evidence="2">Single-pass type IV membrane protein</topology>
    </subcellularLocation>
</comment>
<comment type="alternative products">
    <event type="alternative splicing"/>
    <isoform>
        <id>Q9UEU0-1</id>
        <name>Long</name>
        <sequence type="displayed"/>
    </isoform>
    <isoform>
        <id>Q9UEU0-2</id>
        <name>Short</name>
        <sequence type="described" ref="VSP_006753"/>
    </isoform>
</comment>
<comment type="tissue specificity">
    <text>Expressed in all tissues examined.</text>
</comment>
<comment type="similarity">
    <text evidence="6">Belongs to the VTI1 family.</text>
</comment>
<name>VTI1B_HUMAN</name>
<keyword id="KW-0002">3D-structure</keyword>
<keyword id="KW-0007">Acetylation</keyword>
<keyword id="KW-0025">Alternative splicing</keyword>
<keyword id="KW-0175">Coiled coil</keyword>
<keyword id="KW-0967">Endosome</keyword>
<keyword id="KW-0458">Lysosome</keyword>
<keyword id="KW-0472">Membrane</keyword>
<keyword id="KW-0488">Methylation</keyword>
<keyword id="KW-0597">Phosphoprotein</keyword>
<keyword id="KW-0653">Protein transport</keyword>
<keyword id="KW-1267">Proteomics identification</keyword>
<keyword id="KW-1185">Reference proteome</keyword>
<keyword id="KW-0812">Transmembrane</keyword>
<keyword id="KW-1133">Transmembrane helix</keyword>
<keyword id="KW-0813">Transport</keyword>
<protein>
    <recommendedName>
        <fullName>Vesicle transport through interaction with t-SNAREs homolog 1B</fullName>
    </recommendedName>
    <alternativeName>
        <fullName>Vesicle transport v-SNARE protein Vti1-like 1</fullName>
    </alternativeName>
    <alternativeName>
        <fullName>Vti1-rp1</fullName>
    </alternativeName>
</protein>
<dbReference type="EMBL" id="AF035824">
    <property type="protein sequence ID" value="AAC52016.1"/>
    <property type="molecule type" value="mRNA"/>
</dbReference>
<dbReference type="EMBL" id="AF060902">
    <property type="protein sequence ID" value="AAC73059.1"/>
    <property type="molecule type" value="mRNA"/>
</dbReference>
<dbReference type="EMBL" id="CR456757">
    <property type="protein sequence ID" value="CAG33038.1"/>
    <property type="molecule type" value="mRNA"/>
</dbReference>
<dbReference type="EMBL" id="CR542095">
    <property type="protein sequence ID" value="CAG46892.1"/>
    <property type="molecule type" value="mRNA"/>
</dbReference>
<dbReference type="EMBL" id="BT019348">
    <property type="protein sequence ID" value="AAV38155.1"/>
    <property type="molecule type" value="mRNA"/>
</dbReference>
<dbReference type="EMBL" id="BC003142">
    <property type="protein sequence ID" value="AAH03142.1"/>
    <property type="molecule type" value="mRNA"/>
</dbReference>
<dbReference type="CCDS" id="CCDS9786.1">
    <molecule id="Q9UEU0-1"/>
</dbReference>
<dbReference type="RefSeq" id="NP_006361.1">
    <molecule id="Q9UEU0-1"/>
    <property type="nucleotide sequence ID" value="NM_006370.3"/>
</dbReference>
<dbReference type="PDB" id="2V8S">
    <property type="method" value="X-ray"/>
    <property type="resolution" value="2.22 A"/>
    <property type="chains" value="V=1-96"/>
</dbReference>
<dbReference type="PDBsum" id="2V8S"/>
<dbReference type="SMR" id="Q9UEU0"/>
<dbReference type="BioGRID" id="115753">
    <property type="interactions" value="211"/>
</dbReference>
<dbReference type="CORUM" id="Q9UEU0"/>
<dbReference type="FunCoup" id="Q9UEU0">
    <property type="interactions" value="1317"/>
</dbReference>
<dbReference type="IntAct" id="Q9UEU0">
    <property type="interactions" value="146"/>
</dbReference>
<dbReference type="MINT" id="Q9UEU0"/>
<dbReference type="STRING" id="9606.ENSP00000450731"/>
<dbReference type="TCDB" id="1.F.1.1.5">
    <property type="family name" value="the synaptosomal vesicle fusion pore (svf-pore) family"/>
</dbReference>
<dbReference type="GlyCosmos" id="Q9UEU0">
    <property type="glycosylation" value="2 sites, 1 glycan"/>
</dbReference>
<dbReference type="GlyGen" id="Q9UEU0">
    <property type="glycosylation" value="3 sites, 1 O-linked glycan (2 sites)"/>
</dbReference>
<dbReference type="iPTMnet" id="Q9UEU0"/>
<dbReference type="PhosphoSitePlus" id="Q9UEU0"/>
<dbReference type="SwissPalm" id="Q9UEU0"/>
<dbReference type="BioMuta" id="VTI1B"/>
<dbReference type="DMDM" id="126302613"/>
<dbReference type="jPOST" id="Q9UEU0"/>
<dbReference type="MassIVE" id="Q9UEU0"/>
<dbReference type="PaxDb" id="9606-ENSP00000450731"/>
<dbReference type="PeptideAtlas" id="Q9UEU0"/>
<dbReference type="ProteomicsDB" id="84155">
    <molecule id="Q9UEU0-1"/>
</dbReference>
<dbReference type="ProteomicsDB" id="84156">
    <molecule id="Q9UEU0-2"/>
</dbReference>
<dbReference type="Pumba" id="Q9UEU0"/>
<dbReference type="TopDownProteomics" id="Q9UEU0-1">
    <molecule id="Q9UEU0-1"/>
</dbReference>
<dbReference type="TopDownProteomics" id="Q9UEU0-2">
    <molecule id="Q9UEU0-2"/>
</dbReference>
<dbReference type="Antibodypedia" id="24876">
    <property type="antibodies" value="246 antibodies from 32 providers"/>
</dbReference>
<dbReference type="DNASU" id="10490"/>
<dbReference type="Ensembl" id="ENST00000554659.6">
    <molecule id="Q9UEU0-1"/>
    <property type="protein sequence ID" value="ENSP00000450731.1"/>
    <property type="gene ID" value="ENSG00000100568.11"/>
</dbReference>
<dbReference type="GeneID" id="10490"/>
<dbReference type="KEGG" id="hsa:10490"/>
<dbReference type="MANE-Select" id="ENST00000554659.6">
    <property type="protein sequence ID" value="ENSP00000450731.1"/>
    <property type="RefSeq nucleotide sequence ID" value="NM_006370.3"/>
    <property type="RefSeq protein sequence ID" value="NP_006361.1"/>
</dbReference>
<dbReference type="UCSC" id="uc001xjt.4">
    <molecule id="Q9UEU0-1"/>
    <property type="organism name" value="human"/>
</dbReference>
<dbReference type="AGR" id="HGNC:17793"/>
<dbReference type="CTD" id="10490"/>
<dbReference type="DisGeNET" id="10490"/>
<dbReference type="GeneCards" id="VTI1B"/>
<dbReference type="HGNC" id="HGNC:17793">
    <property type="gene designation" value="VTI1B"/>
</dbReference>
<dbReference type="HPA" id="ENSG00000100568">
    <property type="expression patterns" value="Low tissue specificity"/>
</dbReference>
<dbReference type="MIM" id="603207">
    <property type="type" value="gene"/>
</dbReference>
<dbReference type="neXtProt" id="NX_Q9UEU0"/>
<dbReference type="OpenTargets" id="ENSG00000100568"/>
<dbReference type="PharmGKB" id="PA134861090"/>
<dbReference type="VEuPathDB" id="HostDB:ENSG00000100568"/>
<dbReference type="eggNOG" id="KOG1666">
    <property type="taxonomic scope" value="Eukaryota"/>
</dbReference>
<dbReference type="GeneTree" id="ENSGT00950000183192"/>
<dbReference type="HOGENOM" id="CLU_075474_2_0_1"/>
<dbReference type="InParanoid" id="Q9UEU0"/>
<dbReference type="OMA" id="YRRVMTN"/>
<dbReference type="OrthoDB" id="430637at2759"/>
<dbReference type="PAN-GO" id="Q9UEU0">
    <property type="GO annotations" value="13 GO annotations based on evolutionary models"/>
</dbReference>
<dbReference type="PhylomeDB" id="Q9UEU0"/>
<dbReference type="TreeFam" id="TF312874"/>
<dbReference type="PathwayCommons" id="Q9UEU0"/>
<dbReference type="Reactome" id="R-HSA-114608">
    <property type="pathway name" value="Platelet degranulation"/>
</dbReference>
<dbReference type="SignaLink" id="Q9UEU0"/>
<dbReference type="BioGRID-ORCS" id="10490">
    <property type="hits" value="143 hits in 1158 CRISPR screens"/>
</dbReference>
<dbReference type="ChiTaRS" id="VTI1B">
    <property type="organism name" value="human"/>
</dbReference>
<dbReference type="EvolutionaryTrace" id="Q9UEU0"/>
<dbReference type="GeneWiki" id="VTI1B"/>
<dbReference type="GenomeRNAi" id="10490"/>
<dbReference type="Pharos" id="Q9UEU0">
    <property type="development level" value="Tbio"/>
</dbReference>
<dbReference type="PRO" id="PR:Q9UEU0"/>
<dbReference type="Proteomes" id="UP000005640">
    <property type="component" value="Chromosome 14"/>
</dbReference>
<dbReference type="RNAct" id="Q9UEU0">
    <property type="molecule type" value="protein"/>
</dbReference>
<dbReference type="Bgee" id="ENSG00000100568">
    <property type="expression patterns" value="Expressed in C1 segment of cervical spinal cord and 205 other cell types or tissues"/>
</dbReference>
<dbReference type="ExpressionAtlas" id="Q9UEU0">
    <property type="expression patterns" value="baseline and differential"/>
</dbReference>
<dbReference type="GO" id="GO:0005829">
    <property type="term" value="C:cytosol"/>
    <property type="evidence" value="ECO:0007669"/>
    <property type="project" value="GOC"/>
</dbReference>
<dbReference type="GO" id="GO:0031901">
    <property type="term" value="C:early endosome membrane"/>
    <property type="evidence" value="ECO:0000314"/>
    <property type="project" value="UniProtKB"/>
</dbReference>
<dbReference type="GO" id="GO:0005789">
    <property type="term" value="C:endoplasmic reticulum membrane"/>
    <property type="evidence" value="ECO:0000318"/>
    <property type="project" value="GO_Central"/>
</dbReference>
<dbReference type="GO" id="GO:0012507">
    <property type="term" value="C:ER to Golgi transport vesicle membrane"/>
    <property type="evidence" value="ECO:0000318"/>
    <property type="project" value="GO_Central"/>
</dbReference>
<dbReference type="GO" id="GO:0005576">
    <property type="term" value="C:extracellular region"/>
    <property type="evidence" value="ECO:0000304"/>
    <property type="project" value="Reactome"/>
</dbReference>
<dbReference type="GO" id="GO:0005794">
    <property type="term" value="C:Golgi apparatus"/>
    <property type="evidence" value="ECO:0000314"/>
    <property type="project" value="HPA"/>
</dbReference>
<dbReference type="GO" id="GO:0043231">
    <property type="term" value="C:intracellular membrane-bounded organelle"/>
    <property type="evidence" value="ECO:0000314"/>
    <property type="project" value="HPA"/>
</dbReference>
<dbReference type="GO" id="GO:0031902">
    <property type="term" value="C:late endosome membrane"/>
    <property type="evidence" value="ECO:0000314"/>
    <property type="project" value="UniProtKB"/>
</dbReference>
<dbReference type="GO" id="GO:0005765">
    <property type="term" value="C:lysosomal membrane"/>
    <property type="evidence" value="ECO:0000314"/>
    <property type="project" value="UniProtKB"/>
</dbReference>
<dbReference type="GO" id="GO:0043025">
    <property type="term" value="C:neuronal cell body"/>
    <property type="evidence" value="ECO:0000250"/>
    <property type="project" value="ParkinsonsUK-UCL"/>
</dbReference>
<dbReference type="GO" id="GO:0048471">
    <property type="term" value="C:perinuclear region of cytoplasm"/>
    <property type="evidence" value="ECO:0000314"/>
    <property type="project" value="UniProtKB"/>
</dbReference>
<dbReference type="GO" id="GO:0031093">
    <property type="term" value="C:platelet alpha granule lumen"/>
    <property type="evidence" value="ECO:0000304"/>
    <property type="project" value="Reactome"/>
</dbReference>
<dbReference type="GO" id="GO:0098954">
    <property type="term" value="C:presynaptic endosome membrane"/>
    <property type="evidence" value="ECO:0007669"/>
    <property type="project" value="Ensembl"/>
</dbReference>
<dbReference type="GO" id="GO:0055037">
    <property type="term" value="C:recycling endosome"/>
    <property type="evidence" value="ECO:0000314"/>
    <property type="project" value="UniProtKB"/>
</dbReference>
<dbReference type="GO" id="GO:0055038">
    <property type="term" value="C:recycling endosome membrane"/>
    <property type="evidence" value="ECO:0000314"/>
    <property type="project" value="UniProtKB"/>
</dbReference>
<dbReference type="GO" id="GO:0031201">
    <property type="term" value="C:SNARE complex"/>
    <property type="evidence" value="ECO:0000318"/>
    <property type="project" value="GO_Central"/>
</dbReference>
<dbReference type="GO" id="GO:0008021">
    <property type="term" value="C:synaptic vesicle"/>
    <property type="evidence" value="ECO:0000250"/>
    <property type="project" value="ParkinsonsUK-UCL"/>
</dbReference>
<dbReference type="GO" id="GO:0031982">
    <property type="term" value="C:vesicle"/>
    <property type="evidence" value="ECO:0000314"/>
    <property type="project" value="UniProtKB"/>
</dbReference>
<dbReference type="GO" id="GO:0019869">
    <property type="term" value="F:chloride channel inhibitor activity"/>
    <property type="evidence" value="ECO:0000314"/>
    <property type="project" value="UniProtKB"/>
</dbReference>
<dbReference type="GO" id="GO:0005484">
    <property type="term" value="F:SNAP receptor activity"/>
    <property type="evidence" value="ECO:0000318"/>
    <property type="project" value="GO_Central"/>
</dbReference>
<dbReference type="GO" id="GO:0000149">
    <property type="term" value="F:SNARE binding"/>
    <property type="evidence" value="ECO:0000314"/>
    <property type="project" value="MGI"/>
</dbReference>
<dbReference type="GO" id="GO:0006896">
    <property type="term" value="P:Golgi to vacuole transport"/>
    <property type="evidence" value="ECO:0000318"/>
    <property type="project" value="GO_Central"/>
</dbReference>
<dbReference type="GO" id="GO:0006891">
    <property type="term" value="P:intra-Golgi vesicle-mediated transport"/>
    <property type="evidence" value="ECO:0000318"/>
    <property type="project" value="GO_Central"/>
</dbReference>
<dbReference type="GO" id="GO:0006886">
    <property type="term" value="P:intracellular protein transport"/>
    <property type="evidence" value="ECO:0007669"/>
    <property type="project" value="InterPro"/>
</dbReference>
<dbReference type="GO" id="GO:0016236">
    <property type="term" value="P:macroautophagy"/>
    <property type="evidence" value="ECO:0000318"/>
    <property type="project" value="GO_Central"/>
</dbReference>
<dbReference type="GO" id="GO:0061025">
    <property type="term" value="P:membrane fusion"/>
    <property type="evidence" value="ECO:0000304"/>
    <property type="project" value="ProtInc"/>
</dbReference>
<dbReference type="GO" id="GO:1903076">
    <property type="term" value="P:regulation of protein localization to plasma membrane"/>
    <property type="evidence" value="ECO:0000314"/>
    <property type="project" value="UniProtKB"/>
</dbReference>
<dbReference type="GO" id="GO:0042147">
    <property type="term" value="P:retrograde transport, endosome to Golgi"/>
    <property type="evidence" value="ECO:0000318"/>
    <property type="project" value="GO_Central"/>
</dbReference>
<dbReference type="GO" id="GO:0006904">
    <property type="term" value="P:vesicle docking involved in exocytosis"/>
    <property type="evidence" value="ECO:0000304"/>
    <property type="project" value="ProtInc"/>
</dbReference>
<dbReference type="GO" id="GO:0048280">
    <property type="term" value="P:vesicle fusion with Golgi apparatus"/>
    <property type="evidence" value="ECO:0000318"/>
    <property type="project" value="GO_Central"/>
</dbReference>
<dbReference type="GO" id="GO:0016192">
    <property type="term" value="P:vesicle-mediated transport"/>
    <property type="evidence" value="ECO:0000304"/>
    <property type="project" value="ProtInc"/>
</dbReference>
<dbReference type="CDD" id="cd15890">
    <property type="entry name" value="SNARE_Vti1b"/>
    <property type="match status" value="1"/>
</dbReference>
<dbReference type="FunFam" id="1.20.58.400:FF:000003">
    <property type="entry name" value="Vesicle transport through interaction with t-SNAREs homolog 1B"/>
    <property type="match status" value="1"/>
</dbReference>
<dbReference type="FunFam" id="1.20.5.110:FF:000002">
    <property type="entry name" value="Vesicle transport through interaction with t-SNAREsB"/>
    <property type="match status" value="1"/>
</dbReference>
<dbReference type="Gene3D" id="1.20.5.110">
    <property type="match status" value="1"/>
</dbReference>
<dbReference type="Gene3D" id="1.20.58.400">
    <property type="entry name" value="t-snare proteins"/>
    <property type="match status" value="1"/>
</dbReference>
<dbReference type="InterPro" id="IPR010989">
    <property type="entry name" value="SNARE"/>
</dbReference>
<dbReference type="InterPro" id="IPR000727">
    <property type="entry name" value="T_SNARE_dom"/>
</dbReference>
<dbReference type="InterPro" id="IPR038407">
    <property type="entry name" value="v-SNARE_N_sf"/>
</dbReference>
<dbReference type="InterPro" id="IPR007705">
    <property type="entry name" value="Vesicle_trsprt_v-SNARE_N"/>
</dbReference>
<dbReference type="PANTHER" id="PTHR21230:SF89">
    <property type="entry name" value="VESICLE TRANSPORT THROUGH INTERACTION WITH T-SNARES HOMOLOG 1B"/>
    <property type="match status" value="1"/>
</dbReference>
<dbReference type="PANTHER" id="PTHR21230">
    <property type="entry name" value="VESICLE TRANSPORT V-SNARE PROTEIN VTI1-RELATED"/>
    <property type="match status" value="1"/>
</dbReference>
<dbReference type="Pfam" id="PF05008">
    <property type="entry name" value="V-SNARE"/>
    <property type="match status" value="1"/>
</dbReference>
<dbReference type="Pfam" id="PF12352">
    <property type="entry name" value="V-SNARE_C"/>
    <property type="match status" value="1"/>
</dbReference>
<dbReference type="SMART" id="SM00397">
    <property type="entry name" value="t_SNARE"/>
    <property type="match status" value="1"/>
</dbReference>
<dbReference type="SUPFAM" id="SSF58038">
    <property type="entry name" value="SNARE fusion complex"/>
    <property type="match status" value="1"/>
</dbReference>
<dbReference type="SUPFAM" id="SSF47661">
    <property type="entry name" value="t-snare proteins"/>
    <property type="match status" value="1"/>
</dbReference>
<gene>
    <name type="primary">VTI1B</name>
    <name type="synonym">VTI1</name>
    <name type="synonym">VTI1L</name>
    <name type="synonym">VTI1L1</name>
    <name type="synonym">VTI2</name>
</gene>
<reference key="1">
    <citation type="journal article" date="1998" name="J. Biol. Chem.">
        <title>A human homolog can functionally replace the yeast vesicle-associated SNARE Vti1p in two vesicle transport pathways.</title>
        <authorList>
            <person name="Fischer von Mollard G."/>
            <person name="Stevens T.H."/>
        </authorList>
    </citation>
    <scope>NUCLEOTIDE SEQUENCE [MRNA] (ISOFORMS LONG AND SHORT)</scope>
    <source>
        <tissue>Glioblastoma</tissue>
        <tissue>Hypothalamus</tissue>
    </source>
</reference>
<reference key="2">
    <citation type="journal article" date="1998" name="Biochem. Biophys. Res. Commun.">
        <title>A hVti1 homologue: its expression depends on population doubling levels in both normal and SV40-transformed human fibroblasts.</title>
        <authorList>
            <person name="Li H.-C."/>
            <person name="Tahara H."/>
            <person name="Tsuyama N."/>
            <person name="Ide T."/>
        </authorList>
    </citation>
    <scope>NUCLEOTIDE SEQUENCE [MRNA] (ISOFORM LONG)</scope>
    <source>
        <tissue>Fibroblast</tissue>
    </source>
</reference>
<reference key="3">
    <citation type="submission" date="2004-06" db="EMBL/GenBank/DDBJ databases">
        <title>Cloning of human full open reading frames in Gateway(TM) system entry vector (pDONR201).</title>
        <authorList>
            <person name="Halleck A."/>
            <person name="Ebert L."/>
            <person name="Mkoundinya M."/>
            <person name="Schick M."/>
            <person name="Eisenstein S."/>
            <person name="Neubert P."/>
            <person name="Kstrang K."/>
            <person name="Schatten R."/>
            <person name="Shen B."/>
            <person name="Henze S."/>
            <person name="Mar W."/>
            <person name="Korn B."/>
            <person name="Zuo D."/>
            <person name="Hu Y."/>
            <person name="LaBaer J."/>
        </authorList>
    </citation>
    <scope>NUCLEOTIDE SEQUENCE [LARGE SCALE MRNA] (ISOFORM LONG)</scope>
</reference>
<reference key="4">
    <citation type="submission" date="2004-06" db="EMBL/GenBank/DDBJ databases">
        <title>Cloning of human full open reading frames in Gateway(TM) system entry vector (pDONR201).</title>
        <authorList>
            <person name="Ebert L."/>
            <person name="Schick M."/>
            <person name="Neubert P."/>
            <person name="Schatten R."/>
            <person name="Henze S."/>
            <person name="Korn B."/>
        </authorList>
    </citation>
    <scope>NUCLEOTIDE SEQUENCE [LARGE SCALE MRNA] (ISOFORM LONG)</scope>
</reference>
<reference key="5">
    <citation type="submission" date="2004-10" db="EMBL/GenBank/DDBJ databases">
        <title>Cloning of human full-length CDSs in BD Creator(TM) system donor vector.</title>
        <authorList>
            <person name="Kalnine N."/>
            <person name="Chen X."/>
            <person name="Rolfs A."/>
            <person name="Halleck A."/>
            <person name="Hines L."/>
            <person name="Eisenstein S."/>
            <person name="Koundinya M."/>
            <person name="Raphael J."/>
            <person name="Moreira D."/>
            <person name="Kelley T."/>
            <person name="LaBaer J."/>
            <person name="Lin Y."/>
            <person name="Phelan M."/>
            <person name="Farmer A."/>
        </authorList>
    </citation>
    <scope>NUCLEOTIDE SEQUENCE [LARGE SCALE MRNA] (ISOFORM LONG)</scope>
</reference>
<reference key="6">
    <citation type="journal article" date="2004" name="Genome Res.">
        <title>The status, quality, and expansion of the NIH full-length cDNA project: the Mammalian Gene Collection (MGC).</title>
        <authorList>
            <consortium name="The MGC Project Team"/>
        </authorList>
    </citation>
    <scope>NUCLEOTIDE SEQUENCE [LARGE SCALE MRNA] (ISOFORM LONG)</scope>
    <source>
        <tissue>Kidney</tissue>
    </source>
</reference>
<reference key="7">
    <citation type="journal article" date="2008" name="Mol. Cell">
        <title>Kinase-selective enrichment enables quantitative phosphoproteomics of the kinome across the cell cycle.</title>
        <authorList>
            <person name="Daub H."/>
            <person name="Olsen J.V."/>
            <person name="Bairlein M."/>
            <person name="Gnad F."/>
            <person name="Oppermann F.S."/>
            <person name="Korner R."/>
            <person name="Greff Z."/>
            <person name="Keri G."/>
            <person name="Stemmann O."/>
            <person name="Mann M."/>
        </authorList>
    </citation>
    <scope>IDENTIFICATION BY MASS SPECTROMETRY [LARGE SCALE ANALYSIS]</scope>
    <source>
        <tissue>Cervix carcinoma</tissue>
    </source>
</reference>
<reference key="8">
    <citation type="journal article" date="2009" name="Anal. Chem.">
        <title>Lys-N and trypsin cover complementary parts of the phosphoproteome in a refined SCX-based approach.</title>
        <authorList>
            <person name="Gauci S."/>
            <person name="Helbig A.O."/>
            <person name="Slijper M."/>
            <person name="Krijgsveld J."/>
            <person name="Heck A.J."/>
            <person name="Mohammed S."/>
        </authorList>
    </citation>
    <scope>ACETYLATION [LARGE SCALE ANALYSIS] AT ALA-2</scope>
    <scope>CLEAVAGE OF INITIATOR METHIONINE [LARGE SCALE ANALYSIS]</scope>
    <scope>IDENTIFICATION BY MASS SPECTROMETRY [LARGE SCALE ANALYSIS]</scope>
</reference>
<reference key="9">
    <citation type="journal article" date="2011" name="BMC Syst. Biol.">
        <title>Initial characterization of the human central proteome.</title>
        <authorList>
            <person name="Burkard T.R."/>
            <person name="Planyavsky M."/>
            <person name="Kaupe I."/>
            <person name="Breitwieser F.P."/>
            <person name="Buerckstuemmer T."/>
            <person name="Bennett K.L."/>
            <person name="Superti-Furga G."/>
            <person name="Colinge J."/>
        </authorList>
    </citation>
    <scope>IDENTIFICATION BY MASS SPECTROMETRY [LARGE SCALE ANALYSIS]</scope>
</reference>
<reference key="10">
    <citation type="journal article" date="2012" name="Cell">
        <title>The hairpin-type tail-anchored SNARE syntaxin 17 targets to autophagosomes for fusion with endosomes/lysosomes.</title>
        <authorList>
            <person name="Itakura E."/>
            <person name="Kishi-Itakura C."/>
            <person name="Mizushima N."/>
        </authorList>
    </citation>
    <scope>SUBCELLULAR LOCATION</scope>
    <scope>INTERACTION WITH STX17</scope>
</reference>
<reference key="11">
    <citation type="journal article" date="2012" name="Mol. Cell. Proteomics">
        <title>Comparative large-scale characterisation of plant vs. mammal proteins reveals similar and idiosyncratic N-alpha acetylation features.</title>
        <authorList>
            <person name="Bienvenut W.V."/>
            <person name="Sumpton D."/>
            <person name="Martinez A."/>
            <person name="Lilla S."/>
            <person name="Espagne C."/>
            <person name="Meinnel T."/>
            <person name="Giglione C."/>
        </authorList>
    </citation>
    <scope>ACETYLATION [LARGE SCALE ANALYSIS] AT ALA-2</scope>
    <scope>CLEAVAGE OF INITIATOR METHIONINE [LARGE SCALE ANALYSIS]</scope>
    <scope>IDENTIFICATION BY MASS SPECTROMETRY [LARGE SCALE ANALYSIS]</scope>
</reference>
<reference key="12">
    <citation type="journal article" date="2013" name="J. Proteome Res.">
        <title>Toward a comprehensive characterization of a human cancer cell phosphoproteome.</title>
        <authorList>
            <person name="Zhou H."/>
            <person name="Di Palma S."/>
            <person name="Preisinger C."/>
            <person name="Peng M."/>
            <person name="Polat A.N."/>
            <person name="Heck A.J."/>
            <person name="Mohammed S."/>
        </authorList>
    </citation>
    <scope>PHOSPHORYLATION [LARGE SCALE ANALYSIS] AT THR-103 AND SER-138</scope>
    <scope>IDENTIFICATION BY MASS SPECTROMETRY [LARGE SCALE ANALYSIS]</scope>
    <source>
        <tissue>Cervix carcinoma</tissue>
        <tissue>Erythroleukemia</tissue>
    </source>
</reference>
<reference key="13">
    <citation type="journal article" date="2014" name="J. Proteomics">
        <title>An enzyme assisted RP-RPLC approach for in-depth analysis of human liver phosphoproteome.</title>
        <authorList>
            <person name="Bian Y."/>
            <person name="Song C."/>
            <person name="Cheng K."/>
            <person name="Dong M."/>
            <person name="Wang F."/>
            <person name="Huang J."/>
            <person name="Sun D."/>
            <person name="Wang L."/>
            <person name="Ye M."/>
            <person name="Zou H."/>
        </authorList>
    </citation>
    <scope>IDENTIFICATION BY MASS SPECTROMETRY [LARGE SCALE ANALYSIS]</scope>
    <source>
        <tissue>Liver</tissue>
    </source>
</reference>
<reference key="14">
    <citation type="journal article" date="2014" name="Mol. Cell. Proteomics">
        <title>Immunoaffinity enrichment and mass spectrometry analysis of protein methylation.</title>
        <authorList>
            <person name="Guo A."/>
            <person name="Gu H."/>
            <person name="Zhou J."/>
            <person name="Mulhern D."/>
            <person name="Wang Y."/>
            <person name="Lee K.A."/>
            <person name="Yang V."/>
            <person name="Aguiar M."/>
            <person name="Kornhauser J."/>
            <person name="Jia X."/>
            <person name="Ren J."/>
            <person name="Beausoleil S.A."/>
            <person name="Silva J.C."/>
            <person name="Vemulapalli V."/>
            <person name="Bedford M.T."/>
            <person name="Comb M.J."/>
        </authorList>
    </citation>
    <scope>METHYLATION [LARGE SCALE ANALYSIS] AT ARG-107</scope>
    <scope>IDENTIFICATION BY MASS SPECTROMETRY [LARGE SCALE ANALYSIS]</scope>
    <source>
        <tissue>Colon carcinoma</tissue>
    </source>
</reference>
<reference key="15">
    <citation type="journal article" date="2015" name="Proteomics">
        <title>N-terminome analysis of the human mitochondrial proteome.</title>
        <authorList>
            <person name="Vaca Jacome A.S."/>
            <person name="Rabilloud T."/>
            <person name="Schaeffer-Reiss C."/>
            <person name="Rompais M."/>
            <person name="Ayoub D."/>
            <person name="Lane L."/>
            <person name="Bairoch A."/>
            <person name="Van Dorsselaer A."/>
            <person name="Carapito C."/>
        </authorList>
    </citation>
    <scope>ACETYLATION [LARGE SCALE ANALYSIS] AT ALA-2</scope>
    <scope>CLEAVAGE OF INITIATOR METHIONINE [LARGE SCALE ANALYSIS]</scope>
    <scope>IDENTIFICATION BY MASS SPECTROMETRY [LARGE SCALE ANALYSIS]</scope>
</reference>
<reference key="16">
    <citation type="journal article" date="2007" name="Nature">
        <title>A SNARE-adaptor interaction is a new mode of cargo recognition in clathrin-coated vesicles.</title>
        <authorList>
            <person name="Miller S.E."/>
            <person name="Collins B.M."/>
            <person name="McCoy A.J."/>
            <person name="Robinson M.S."/>
            <person name="Owen D.J."/>
        </authorList>
    </citation>
    <scope>X-RAY CRYSTALLOGRAPHY (2.22 ANGSTROMS) OF 1-96 IN COMPLEX WITH CLINT1</scope>
    <scope>SUBCELLULAR LOCATION</scope>
    <scope>MUTAGENESIS OF SER-8; GLU-12; ILE-17; GLU-23; GLU-65; PHE-73; PRO-76 AND MET-77</scope>
</reference>